<feature type="chain" id="PRO_0000051302" description="EARP and GARP complex-interacting protein 1">
    <location>
        <begin position="1"/>
        <end position="386"/>
    </location>
</feature>
<feature type="repeat" description="WD 1">
    <location>
        <begin position="132"/>
        <end position="172"/>
    </location>
</feature>
<feature type="repeat" description="WD 2">
    <location>
        <begin position="182"/>
        <end position="222"/>
    </location>
</feature>
<feature type="repeat" description="WD 3">
    <location>
        <begin position="226"/>
        <end position="266"/>
    </location>
</feature>
<feature type="repeat" description="WD 4">
    <location>
        <begin position="270"/>
        <end position="310"/>
    </location>
</feature>
<feature type="repeat" description="WD 5">
    <location>
        <begin position="344"/>
        <end position="384"/>
    </location>
</feature>
<feature type="region of interest" description="Disordered" evidence="2">
    <location>
        <begin position="312"/>
        <end position="332"/>
    </location>
</feature>
<feature type="compositionally biased region" description="Basic and acidic residues" evidence="2">
    <location>
        <begin position="322"/>
        <end position="332"/>
    </location>
</feature>
<feature type="modified residue" description="N-acetylmethionine" evidence="1">
    <location>
        <position position="1"/>
    </location>
</feature>
<feature type="modified residue" description="Phosphoserine" evidence="1">
    <location>
        <position position="320"/>
    </location>
</feature>
<gene>
    <name evidence="6 8" type="primary">Eipr1</name>
    <name evidence="8" type="synonym">Tssc1</name>
</gene>
<dbReference type="EMBL" id="BC087633">
    <property type="protein sequence ID" value="AAH87633.1"/>
    <property type="molecule type" value="mRNA"/>
</dbReference>
<dbReference type="RefSeq" id="NP_001012192.1">
    <property type="nucleotide sequence ID" value="NM_001012192.1"/>
</dbReference>
<dbReference type="SMR" id="Q5PPK9"/>
<dbReference type="BioGRID" id="263666">
    <property type="interactions" value="4"/>
</dbReference>
<dbReference type="FunCoup" id="Q5PPK9">
    <property type="interactions" value="3485"/>
</dbReference>
<dbReference type="STRING" id="10116.ENSRNOP00000056930"/>
<dbReference type="iPTMnet" id="Q5PPK9"/>
<dbReference type="PhosphoSitePlus" id="Q5PPK9"/>
<dbReference type="jPOST" id="Q5PPK9"/>
<dbReference type="PaxDb" id="10116-ENSRNOP00000056930"/>
<dbReference type="Ensembl" id="ENSRNOT00000060185.5">
    <property type="protein sequence ID" value="ENSRNOP00000056930.5"/>
    <property type="gene ID" value="ENSRNOG00000009285.8"/>
</dbReference>
<dbReference type="GeneID" id="362721"/>
<dbReference type="KEGG" id="rno:362721"/>
<dbReference type="AGR" id="RGD:1305817"/>
<dbReference type="CTD" id="7260"/>
<dbReference type="RGD" id="1305817">
    <property type="gene designation" value="Eipr1"/>
</dbReference>
<dbReference type="eggNOG" id="KOG1007">
    <property type="taxonomic scope" value="Eukaryota"/>
</dbReference>
<dbReference type="GeneTree" id="ENSGT00730000111137"/>
<dbReference type="InParanoid" id="Q5PPK9"/>
<dbReference type="OMA" id="HKYAILR"/>
<dbReference type="OrthoDB" id="196957at2759"/>
<dbReference type="PhylomeDB" id="Q5PPK9"/>
<dbReference type="PRO" id="PR:Q5PPK9"/>
<dbReference type="Proteomes" id="UP000002494">
    <property type="component" value="Chromosome 6"/>
</dbReference>
<dbReference type="GO" id="GO:1990745">
    <property type="term" value="C:EARP complex"/>
    <property type="evidence" value="ECO:0000266"/>
    <property type="project" value="RGD"/>
</dbReference>
<dbReference type="GO" id="GO:0000938">
    <property type="term" value="C:GARP complex"/>
    <property type="evidence" value="ECO:0000266"/>
    <property type="project" value="RGD"/>
</dbReference>
<dbReference type="GO" id="GO:0005802">
    <property type="term" value="C:trans-Golgi network"/>
    <property type="evidence" value="ECO:0000250"/>
    <property type="project" value="UniProtKB"/>
</dbReference>
<dbReference type="GO" id="GO:0032456">
    <property type="term" value="P:endocytic recycling"/>
    <property type="evidence" value="ECO:0000315"/>
    <property type="project" value="UniProtKB"/>
</dbReference>
<dbReference type="GO" id="GO:2001137">
    <property type="term" value="P:positive regulation of endocytic recycling"/>
    <property type="evidence" value="ECO:0000250"/>
    <property type="project" value="UniProtKB"/>
</dbReference>
<dbReference type="GO" id="GO:1905281">
    <property type="term" value="P:positive regulation of retrograde transport, endosome to Golgi"/>
    <property type="evidence" value="ECO:0000250"/>
    <property type="project" value="UniProtKB"/>
</dbReference>
<dbReference type="GO" id="GO:0016567">
    <property type="term" value="P:protein ubiquitination"/>
    <property type="evidence" value="ECO:0000318"/>
    <property type="project" value="GO_Central"/>
</dbReference>
<dbReference type="GO" id="GO:0050796">
    <property type="term" value="P:regulation of insulin secretion"/>
    <property type="evidence" value="ECO:0000315"/>
    <property type="project" value="UniProtKB"/>
</dbReference>
<dbReference type="FunFam" id="2.130.10.10:FF:000156">
    <property type="entry name" value="protein TSSC1 isoform X1"/>
    <property type="match status" value="1"/>
</dbReference>
<dbReference type="Gene3D" id="2.130.10.10">
    <property type="entry name" value="YVTN repeat-like/Quinoprotein amine dehydrogenase"/>
    <property type="match status" value="1"/>
</dbReference>
<dbReference type="InterPro" id="IPR040323">
    <property type="entry name" value="EIPR1"/>
</dbReference>
<dbReference type="InterPro" id="IPR015943">
    <property type="entry name" value="WD40/YVTN_repeat-like_dom_sf"/>
</dbReference>
<dbReference type="InterPro" id="IPR019775">
    <property type="entry name" value="WD40_repeat_CS"/>
</dbReference>
<dbReference type="InterPro" id="IPR036322">
    <property type="entry name" value="WD40_repeat_dom_sf"/>
</dbReference>
<dbReference type="InterPro" id="IPR001680">
    <property type="entry name" value="WD40_rpt"/>
</dbReference>
<dbReference type="PANTHER" id="PTHR14205:SF15">
    <property type="entry name" value="EARP AND GARP COMPLEX-INTERACTING PROTEIN 1"/>
    <property type="match status" value="1"/>
</dbReference>
<dbReference type="PANTHER" id="PTHR14205">
    <property type="entry name" value="WD-REPEAT PROTEIN"/>
    <property type="match status" value="1"/>
</dbReference>
<dbReference type="Pfam" id="PF23609">
    <property type="entry name" value="Beta-prop_EIPR1"/>
    <property type="match status" value="1"/>
</dbReference>
<dbReference type="Pfam" id="PF00400">
    <property type="entry name" value="WD40"/>
    <property type="match status" value="1"/>
</dbReference>
<dbReference type="SMART" id="SM00320">
    <property type="entry name" value="WD40"/>
    <property type="match status" value="5"/>
</dbReference>
<dbReference type="SUPFAM" id="SSF50978">
    <property type="entry name" value="WD40 repeat-like"/>
    <property type="match status" value="1"/>
</dbReference>
<dbReference type="PROSITE" id="PS00678">
    <property type="entry name" value="WD_REPEATS_1"/>
    <property type="match status" value="1"/>
</dbReference>
<dbReference type="PROSITE" id="PS50082">
    <property type="entry name" value="WD_REPEATS_2"/>
    <property type="match status" value="1"/>
</dbReference>
<dbReference type="PROSITE" id="PS50294">
    <property type="entry name" value="WD_REPEATS_REGION"/>
    <property type="match status" value="1"/>
</dbReference>
<name>EIPR1_RAT</name>
<keyword id="KW-0007">Acetylation</keyword>
<keyword id="KW-0333">Golgi apparatus</keyword>
<keyword id="KW-0597">Phosphoprotein</keyword>
<keyword id="KW-1185">Reference proteome</keyword>
<keyword id="KW-0677">Repeat</keyword>
<keyword id="KW-0853">WD repeat</keyword>
<comment type="function">
    <text evidence="1 5">Acts as a component of endosomal retrieval machinery that is involved in protein transport from early endosomes to either recycling endosomes or the trans-Golgi network (By similarity). Mediates the recruitment of Golgi-associated retrograde protein (GARP) complex to the trans-Golgi network and controls early endosome-to-Golgi transport of internalized protein (By similarity). Promotes the recycling of internalized transferrin receptor (TFRC) to the plasma membrane through interaction with endosome-associated recycling protein (EARP) complex (By similarity). Controls proper insulin distribution and secretion, and retention of cargo in mature dense core vesicles (PubMed:3172165). Required for the stability of the endosome-associated retrograde protein (EARP) complex subunits and for proper localization and association of EARP with membranes (PubMed:3172165).</text>
</comment>
<comment type="subunit">
    <text evidence="3 4">Interacts with two multisubunit tethering complexes: EARP composed of VPS50, VPS51, VPS52 and VPS53 subunits and GARP complex composed of VPS51, VPS52, VPS53 and VPS54 subunits (PubMed:27191843, PubMed:27440922). Interacts with SNAP29 (PubMed:27191843).</text>
</comment>
<comment type="subcellular location">
    <subcellularLocation>
        <location evidence="1">Golgi apparatus</location>
        <location evidence="1">trans-Golgi network</location>
    </subcellularLocation>
</comment>
<comment type="tissue specificity">
    <text evidence="4">Ubiquitous. Highly expressed in brain, adipose tissue, spleen and kidney (at protein level).</text>
</comment>
<comment type="similarity">
    <text evidence="7">Belongs to the WD repeat EIPR1 family.</text>
</comment>
<reference key="1">
    <citation type="journal article" date="2004" name="Genome Res.">
        <title>The status, quality, and expansion of the NIH full-length cDNA project: the Mammalian Gene Collection (MGC).</title>
        <authorList>
            <consortium name="The MGC Project Team"/>
        </authorList>
    </citation>
    <scope>NUCLEOTIDE SEQUENCE [LARGE SCALE MRNA]</scope>
    <source>
        <tissue>Brain</tissue>
    </source>
</reference>
<reference key="2">
    <citation type="journal article" date="2016" name="Mol. Biol. Cell">
        <title>TSSC1 is novel component of the endosomal retrieval machinery.</title>
        <authorList>
            <person name="Gershlick D.C."/>
            <person name="Schindler C."/>
            <person name="Chen Y."/>
            <person name="Bonifacino J.S."/>
        </authorList>
    </citation>
    <scope>INTERACTION WITH EARP COMPLEX</scope>
    <scope>TISSUE SPECIFICITY</scope>
</reference>
<reference key="3">
    <citation type="journal article" date="2016" name="PLoS Genet.">
        <title>The EARP complex and its interactor eipr-1 are required for cargo sorting to dense-core vesicles.</title>
        <authorList>
            <person name="Topalidou I."/>
            <person name="Cattin-Ortola J."/>
            <person name="Pappas A.L."/>
            <person name="Cooper K."/>
            <person name="Merrihew G.E."/>
            <person name="MacCoss M.J."/>
            <person name="Ailion M."/>
        </authorList>
    </citation>
    <scope>INTERACTION WITH VPS50; VPS51 AND SNAP29</scope>
</reference>
<reference key="4">
    <citation type="journal article" date="2020" name="Mol. Biol. Cell">
        <title>EIPR1 controls dense-core vesicle cargo retention and EARP complex localization in insulin-secreting cells.</title>
        <authorList>
            <person name="Topalidou I."/>
            <person name="Cattin-Ortola J."/>
            <person name="Hummer B."/>
            <person name="Asensio C.S."/>
            <person name="Ailion M."/>
        </authorList>
    </citation>
    <scope>FUNCTION</scope>
</reference>
<sequence>MEDDAPVIYGLEFQARALTPQTAETDAIRFLVGTQSLKYDNQIHIIDFDDENNIINKNVLLHQAGEIWHISASPADKGVLATCYNKTSDSRVQACAAVWRMPKELESGSHESPEDPASTAQTLELLCHLDNGAQGNVACVVWEPMGDGKKVISLADSHILLWDLQPSSSQAVLASSAALEGRGQLKFTSGRWSPHHNCTQVATASDTTLRGWDTRSMSQIYCIENAHGQLVRDLDFNPNKQYYLASCGDDCKVKFWDTRNVTEPVKTLEEHSHWVWSVRYNHSHDQLVLTGSSDSRVILSNMVSISSEPFGHLVDDDDVSDPEEHHTEKSKEPLQDNVIATYEEHEDSVYAVDWASADPWLFASLSYDGRLVINRVPRALKYHILL</sequence>
<protein>
    <recommendedName>
        <fullName evidence="1">EARP and GARP complex-interacting protein 1</fullName>
    </recommendedName>
    <alternativeName>
        <fullName evidence="6">Endosome-associated recycling protein-interacting protein</fullName>
    </alternativeName>
    <alternativeName>
        <fullName evidence="1">Golgi-associated retrograde protein-interacting protein</fullName>
    </alternativeName>
    <alternativeName>
        <fullName>Tumor-suppressing STF cDNA 1 protein</fullName>
    </alternativeName>
    <alternativeName>
        <fullName evidence="1">Tumor-suppressing subchromosomal transferable fragment candidate gene 1 protein</fullName>
    </alternativeName>
</protein>
<evidence type="ECO:0000250" key="1">
    <source>
        <dbReference type="UniProtKB" id="Q53HC9"/>
    </source>
</evidence>
<evidence type="ECO:0000256" key="2">
    <source>
        <dbReference type="SAM" id="MobiDB-lite"/>
    </source>
</evidence>
<evidence type="ECO:0000269" key="3">
    <source>
    </source>
</evidence>
<evidence type="ECO:0000269" key="4">
    <source>
    </source>
</evidence>
<evidence type="ECO:0000269" key="5">
    <source>
    </source>
</evidence>
<evidence type="ECO:0000303" key="6">
    <source>
    </source>
</evidence>
<evidence type="ECO:0000305" key="7"/>
<evidence type="ECO:0000312" key="8">
    <source>
        <dbReference type="RGD" id="1305817"/>
    </source>
</evidence>
<organism>
    <name type="scientific">Rattus norvegicus</name>
    <name type="common">Rat</name>
    <dbReference type="NCBI Taxonomy" id="10116"/>
    <lineage>
        <taxon>Eukaryota</taxon>
        <taxon>Metazoa</taxon>
        <taxon>Chordata</taxon>
        <taxon>Craniata</taxon>
        <taxon>Vertebrata</taxon>
        <taxon>Euteleostomi</taxon>
        <taxon>Mammalia</taxon>
        <taxon>Eutheria</taxon>
        <taxon>Euarchontoglires</taxon>
        <taxon>Glires</taxon>
        <taxon>Rodentia</taxon>
        <taxon>Myomorpha</taxon>
        <taxon>Muroidea</taxon>
        <taxon>Muridae</taxon>
        <taxon>Murinae</taxon>
        <taxon>Rattus</taxon>
    </lineage>
</organism>
<proteinExistence type="evidence at protein level"/>
<accession>Q5PPK9</accession>